<protein>
    <recommendedName>
        <fullName evidence="1">N-acetyl-gamma-glutamyl-phosphate reductase</fullName>
        <shortName evidence="1">AGPR</shortName>
        <ecNumber evidence="1">1.2.1.38</ecNumber>
    </recommendedName>
    <alternativeName>
        <fullName evidence="1">N-acetyl-glutamate semialdehyde dehydrogenase</fullName>
        <shortName evidence="1">NAGSA dehydrogenase</shortName>
    </alternativeName>
</protein>
<accession>A5VPX1</accession>
<name>ARGC_BRUO2</name>
<reference key="1">
    <citation type="journal article" date="2009" name="PLoS ONE">
        <title>Genome degradation in Brucella ovis corresponds with narrowing of its host range and tissue tropism.</title>
        <authorList>
            <person name="Tsolis R.M."/>
            <person name="Seshadri R."/>
            <person name="Santos R.L."/>
            <person name="Sangari F.J."/>
            <person name="Lobo J.M."/>
            <person name="de Jong M.F."/>
            <person name="Ren Q."/>
            <person name="Myers G."/>
            <person name="Brinkac L.M."/>
            <person name="Nelson W.C."/>
            <person name="Deboy R.T."/>
            <person name="Angiuoli S."/>
            <person name="Khouri H."/>
            <person name="Dimitrov G."/>
            <person name="Robinson J.R."/>
            <person name="Mulligan S."/>
            <person name="Walker R.L."/>
            <person name="Elzer P.E."/>
            <person name="Hassan K.A."/>
            <person name="Paulsen I.T."/>
        </authorList>
    </citation>
    <scope>NUCLEOTIDE SEQUENCE [LARGE SCALE GENOMIC DNA]</scope>
    <source>
        <strain>ATCC 25840 / 63/290 / NCTC 10512</strain>
    </source>
</reference>
<sequence length="310" mass="33744">MKPKIFIDGEHGTTGLQIRTRLAERDDLEVISIPEAERRNKDLRADYLRAADIAILCLPDDASKEAVSLLEGHNSTRIIDTSTAHRVHPDWAYGFAELAKGQRERIAEARLVANPGCYPTGAIALVRPLCDAGLLPADYPVSVNAVSGYTGGGKQLIAQMEDRNHPDYLAANNFLYGLPLKHKHVPELQLHGRLDRRPIFSPSVGRFPQGMIVQVPLFLSELEGSPSLAKVHAVLTEHYAGQDIVEVVPLEESAKLPRVDAEELAGKDGMKLFVFGTEDHGQVNLVALLDNLGKGASGAAVQNMNLMLGK</sequence>
<comment type="function">
    <text evidence="1">Catalyzes the NADPH-dependent reduction of N-acetyl-5-glutamyl phosphate to yield N-acetyl-L-glutamate 5-semialdehyde.</text>
</comment>
<comment type="catalytic activity">
    <reaction evidence="1">
        <text>N-acetyl-L-glutamate 5-semialdehyde + phosphate + NADP(+) = N-acetyl-L-glutamyl 5-phosphate + NADPH + H(+)</text>
        <dbReference type="Rhea" id="RHEA:21588"/>
        <dbReference type="ChEBI" id="CHEBI:15378"/>
        <dbReference type="ChEBI" id="CHEBI:29123"/>
        <dbReference type="ChEBI" id="CHEBI:43474"/>
        <dbReference type="ChEBI" id="CHEBI:57783"/>
        <dbReference type="ChEBI" id="CHEBI:57936"/>
        <dbReference type="ChEBI" id="CHEBI:58349"/>
        <dbReference type="EC" id="1.2.1.38"/>
    </reaction>
</comment>
<comment type="pathway">
    <text evidence="1">Amino-acid biosynthesis; L-arginine biosynthesis; N(2)-acetyl-L-ornithine from L-glutamate: step 3/4.</text>
</comment>
<comment type="subcellular location">
    <subcellularLocation>
        <location evidence="1">Cytoplasm</location>
    </subcellularLocation>
</comment>
<comment type="similarity">
    <text evidence="1">Belongs to the NAGSA dehydrogenase family. Type 2 subfamily.</text>
</comment>
<keyword id="KW-0028">Amino-acid biosynthesis</keyword>
<keyword id="KW-0055">Arginine biosynthesis</keyword>
<keyword id="KW-0963">Cytoplasm</keyword>
<keyword id="KW-0521">NADP</keyword>
<keyword id="KW-0560">Oxidoreductase</keyword>
<dbReference type="EC" id="1.2.1.38" evidence="1"/>
<dbReference type="EMBL" id="CP000708">
    <property type="protein sequence ID" value="ABQ61374.1"/>
    <property type="molecule type" value="Genomic_DNA"/>
</dbReference>
<dbReference type="RefSeq" id="WP_006012189.1">
    <property type="nucleotide sequence ID" value="NC_009505.1"/>
</dbReference>
<dbReference type="SMR" id="A5VPX1"/>
<dbReference type="GeneID" id="45124224"/>
<dbReference type="KEGG" id="bov:BOV_0783"/>
<dbReference type="HOGENOM" id="CLU_077118_0_0_5"/>
<dbReference type="PhylomeDB" id="A5VPX1"/>
<dbReference type="UniPathway" id="UPA00068">
    <property type="reaction ID" value="UER00108"/>
</dbReference>
<dbReference type="Proteomes" id="UP000006383">
    <property type="component" value="Chromosome I"/>
</dbReference>
<dbReference type="GO" id="GO:0005737">
    <property type="term" value="C:cytoplasm"/>
    <property type="evidence" value="ECO:0007669"/>
    <property type="project" value="UniProtKB-SubCell"/>
</dbReference>
<dbReference type="GO" id="GO:0003942">
    <property type="term" value="F:N-acetyl-gamma-glutamyl-phosphate reductase activity"/>
    <property type="evidence" value="ECO:0007669"/>
    <property type="project" value="UniProtKB-UniRule"/>
</dbReference>
<dbReference type="GO" id="GO:0051287">
    <property type="term" value="F:NAD binding"/>
    <property type="evidence" value="ECO:0007669"/>
    <property type="project" value="InterPro"/>
</dbReference>
<dbReference type="GO" id="GO:0006526">
    <property type="term" value="P:L-arginine biosynthetic process"/>
    <property type="evidence" value="ECO:0007669"/>
    <property type="project" value="UniProtKB-UniRule"/>
</dbReference>
<dbReference type="CDD" id="cd23935">
    <property type="entry name" value="AGPR_2_C"/>
    <property type="match status" value="1"/>
</dbReference>
<dbReference type="CDD" id="cd17896">
    <property type="entry name" value="AGPR_2_N"/>
    <property type="match status" value="1"/>
</dbReference>
<dbReference type="Gene3D" id="3.30.360.10">
    <property type="entry name" value="Dihydrodipicolinate Reductase, domain 2"/>
    <property type="match status" value="1"/>
</dbReference>
<dbReference type="Gene3D" id="3.40.50.720">
    <property type="entry name" value="NAD(P)-binding Rossmann-like Domain"/>
    <property type="match status" value="1"/>
</dbReference>
<dbReference type="HAMAP" id="MF_01110">
    <property type="entry name" value="ArgC_type2"/>
    <property type="match status" value="1"/>
</dbReference>
<dbReference type="InterPro" id="IPR023013">
    <property type="entry name" value="AGPR_AS"/>
</dbReference>
<dbReference type="InterPro" id="IPR010136">
    <property type="entry name" value="AGPR_type-2"/>
</dbReference>
<dbReference type="InterPro" id="IPR036291">
    <property type="entry name" value="NAD(P)-bd_dom_sf"/>
</dbReference>
<dbReference type="InterPro" id="IPR050085">
    <property type="entry name" value="NAGSA_dehydrogenase"/>
</dbReference>
<dbReference type="InterPro" id="IPR000534">
    <property type="entry name" value="Semialdehyde_DH_NAD-bd"/>
</dbReference>
<dbReference type="NCBIfam" id="TIGR01851">
    <property type="entry name" value="argC_other"/>
    <property type="match status" value="1"/>
</dbReference>
<dbReference type="PANTHER" id="PTHR32338:SF10">
    <property type="entry name" value="N-ACETYL-GAMMA-GLUTAMYL-PHOSPHATE REDUCTASE, CHLOROPLASTIC-RELATED"/>
    <property type="match status" value="1"/>
</dbReference>
<dbReference type="PANTHER" id="PTHR32338">
    <property type="entry name" value="N-ACETYL-GAMMA-GLUTAMYL-PHOSPHATE REDUCTASE, CHLOROPLASTIC-RELATED-RELATED"/>
    <property type="match status" value="1"/>
</dbReference>
<dbReference type="Pfam" id="PF01118">
    <property type="entry name" value="Semialdhyde_dh"/>
    <property type="match status" value="1"/>
</dbReference>
<dbReference type="Pfam" id="PF22698">
    <property type="entry name" value="Semialdhyde_dhC_1"/>
    <property type="match status" value="1"/>
</dbReference>
<dbReference type="SMART" id="SM00859">
    <property type="entry name" value="Semialdhyde_dh"/>
    <property type="match status" value="1"/>
</dbReference>
<dbReference type="SUPFAM" id="SSF55347">
    <property type="entry name" value="Glyceraldehyde-3-phosphate dehydrogenase-like, C-terminal domain"/>
    <property type="match status" value="1"/>
</dbReference>
<dbReference type="SUPFAM" id="SSF51735">
    <property type="entry name" value="NAD(P)-binding Rossmann-fold domains"/>
    <property type="match status" value="1"/>
</dbReference>
<dbReference type="PROSITE" id="PS01224">
    <property type="entry name" value="ARGC"/>
    <property type="match status" value="1"/>
</dbReference>
<gene>
    <name evidence="1" type="primary">argC</name>
    <name type="ordered locus">BOV_0783</name>
</gene>
<evidence type="ECO:0000255" key="1">
    <source>
        <dbReference type="HAMAP-Rule" id="MF_01110"/>
    </source>
</evidence>
<feature type="chain" id="PRO_1000065140" description="N-acetyl-gamma-glutamyl-phosphate reductase">
    <location>
        <begin position="1"/>
        <end position="310"/>
    </location>
</feature>
<feature type="active site" evidence="1">
    <location>
        <position position="117"/>
    </location>
</feature>
<proteinExistence type="inferred from homology"/>
<organism>
    <name type="scientific">Brucella ovis (strain ATCC 25840 / 63/290 / NCTC 10512)</name>
    <dbReference type="NCBI Taxonomy" id="444178"/>
    <lineage>
        <taxon>Bacteria</taxon>
        <taxon>Pseudomonadati</taxon>
        <taxon>Pseudomonadota</taxon>
        <taxon>Alphaproteobacteria</taxon>
        <taxon>Hyphomicrobiales</taxon>
        <taxon>Brucellaceae</taxon>
        <taxon>Brucella/Ochrobactrum group</taxon>
        <taxon>Brucella</taxon>
    </lineage>
</organism>